<evidence type="ECO:0000255" key="1">
    <source>
        <dbReference type="HAMAP-Rule" id="MF_00823"/>
    </source>
</evidence>
<evidence type="ECO:0000255" key="2">
    <source>
        <dbReference type="PROSITE-ProRule" id="PRU01137"/>
    </source>
</evidence>
<proteinExistence type="inferred from homology"/>
<protein>
    <recommendedName>
        <fullName evidence="1">Acetyl-coenzyme A carboxylase carboxyl transferase subunit alpha</fullName>
        <shortName evidence="1">ACCase subunit alpha</shortName>
        <shortName evidence="1">Acetyl-CoA carboxylase carboxyltransferase subunit alpha</shortName>
        <ecNumber evidence="1">2.1.3.15</ecNumber>
    </recommendedName>
</protein>
<keyword id="KW-0067">ATP-binding</keyword>
<keyword id="KW-0963">Cytoplasm</keyword>
<keyword id="KW-0275">Fatty acid biosynthesis</keyword>
<keyword id="KW-0276">Fatty acid metabolism</keyword>
<keyword id="KW-0444">Lipid biosynthesis</keyword>
<keyword id="KW-0443">Lipid metabolism</keyword>
<keyword id="KW-0547">Nucleotide-binding</keyword>
<keyword id="KW-0808">Transferase</keyword>
<dbReference type="EC" id="2.1.3.15" evidence="1"/>
<dbReference type="EMBL" id="CP000485">
    <property type="protein sequence ID" value="ABK87390.1"/>
    <property type="molecule type" value="Genomic_DNA"/>
</dbReference>
<dbReference type="RefSeq" id="WP_000818794.1">
    <property type="nucleotide sequence ID" value="NC_008600.1"/>
</dbReference>
<dbReference type="SMR" id="A0RJJ7"/>
<dbReference type="GeneID" id="75087757"/>
<dbReference type="KEGG" id="btl:BALH_4183"/>
<dbReference type="HOGENOM" id="CLU_015486_0_2_9"/>
<dbReference type="UniPathway" id="UPA00655">
    <property type="reaction ID" value="UER00711"/>
</dbReference>
<dbReference type="GO" id="GO:0009317">
    <property type="term" value="C:acetyl-CoA carboxylase complex"/>
    <property type="evidence" value="ECO:0007669"/>
    <property type="project" value="InterPro"/>
</dbReference>
<dbReference type="GO" id="GO:0003989">
    <property type="term" value="F:acetyl-CoA carboxylase activity"/>
    <property type="evidence" value="ECO:0007669"/>
    <property type="project" value="InterPro"/>
</dbReference>
<dbReference type="GO" id="GO:0005524">
    <property type="term" value="F:ATP binding"/>
    <property type="evidence" value="ECO:0007669"/>
    <property type="project" value="UniProtKB-KW"/>
</dbReference>
<dbReference type="GO" id="GO:0016743">
    <property type="term" value="F:carboxyl- or carbamoyltransferase activity"/>
    <property type="evidence" value="ECO:0007669"/>
    <property type="project" value="UniProtKB-UniRule"/>
</dbReference>
<dbReference type="GO" id="GO:0006633">
    <property type="term" value="P:fatty acid biosynthetic process"/>
    <property type="evidence" value="ECO:0007669"/>
    <property type="project" value="UniProtKB-KW"/>
</dbReference>
<dbReference type="GO" id="GO:2001295">
    <property type="term" value="P:malonyl-CoA biosynthetic process"/>
    <property type="evidence" value="ECO:0007669"/>
    <property type="project" value="UniProtKB-UniRule"/>
</dbReference>
<dbReference type="Gene3D" id="3.90.226.10">
    <property type="entry name" value="2-enoyl-CoA Hydratase, Chain A, domain 1"/>
    <property type="match status" value="1"/>
</dbReference>
<dbReference type="HAMAP" id="MF_00823">
    <property type="entry name" value="AcetylCoA_CT_alpha"/>
    <property type="match status" value="1"/>
</dbReference>
<dbReference type="InterPro" id="IPR001095">
    <property type="entry name" value="Acetyl_CoA_COase_a_su"/>
</dbReference>
<dbReference type="InterPro" id="IPR029045">
    <property type="entry name" value="ClpP/crotonase-like_dom_sf"/>
</dbReference>
<dbReference type="InterPro" id="IPR011763">
    <property type="entry name" value="COA_CT_C"/>
</dbReference>
<dbReference type="NCBIfam" id="TIGR00513">
    <property type="entry name" value="accA"/>
    <property type="match status" value="1"/>
</dbReference>
<dbReference type="NCBIfam" id="NF041504">
    <property type="entry name" value="AccA_sub"/>
    <property type="match status" value="1"/>
</dbReference>
<dbReference type="NCBIfam" id="NF004344">
    <property type="entry name" value="PRK05724.1"/>
    <property type="match status" value="1"/>
</dbReference>
<dbReference type="PANTHER" id="PTHR42853">
    <property type="entry name" value="ACETYL-COENZYME A CARBOXYLASE CARBOXYL TRANSFERASE SUBUNIT ALPHA"/>
    <property type="match status" value="1"/>
</dbReference>
<dbReference type="PANTHER" id="PTHR42853:SF3">
    <property type="entry name" value="ACETYL-COENZYME A CARBOXYLASE CARBOXYL TRANSFERASE SUBUNIT ALPHA, CHLOROPLASTIC"/>
    <property type="match status" value="1"/>
</dbReference>
<dbReference type="Pfam" id="PF03255">
    <property type="entry name" value="ACCA"/>
    <property type="match status" value="1"/>
</dbReference>
<dbReference type="PRINTS" id="PR01069">
    <property type="entry name" value="ACCCTRFRASEA"/>
</dbReference>
<dbReference type="SUPFAM" id="SSF52096">
    <property type="entry name" value="ClpP/crotonase"/>
    <property type="match status" value="1"/>
</dbReference>
<dbReference type="PROSITE" id="PS50989">
    <property type="entry name" value="COA_CT_CTER"/>
    <property type="match status" value="1"/>
</dbReference>
<sequence length="324" mass="36470">MAELEFEKPVVELRNKIRELKDYTKNSQMDFSEEIRILEDKLENLEEDIYGNMKVWDRVQIARHAERPTTLDYIEHLFTDFFECHGDRLFGDDAAIVGGIAKYKGMPVTVIGHQRGKDTKENIRRNFGMPHPEGYRKALRLMKQAEKFNRPIICFIDTKGAYPGKAAEERGQSEAIARNLFEMAGLTVPVICIVIGEGGSGGALGLGVGDYIHMLENSTYSVITPEGAAAILWKDAGKAKEAAEAMRITAADLKELGVIDEIIPEAKGGAHRNVLKQSENIDLMLRKTFEQLNGISKDELIEKRYEKYMKIGQVSFSNASIWIK</sequence>
<organism>
    <name type="scientific">Bacillus thuringiensis (strain Al Hakam)</name>
    <dbReference type="NCBI Taxonomy" id="412694"/>
    <lineage>
        <taxon>Bacteria</taxon>
        <taxon>Bacillati</taxon>
        <taxon>Bacillota</taxon>
        <taxon>Bacilli</taxon>
        <taxon>Bacillales</taxon>
        <taxon>Bacillaceae</taxon>
        <taxon>Bacillus</taxon>
        <taxon>Bacillus cereus group</taxon>
    </lineage>
</organism>
<comment type="function">
    <text evidence="1">Component of the acetyl coenzyme A carboxylase (ACC) complex. First, biotin carboxylase catalyzes the carboxylation of biotin on its carrier protein (BCCP) and then the CO(2) group is transferred by the carboxyltransferase to acetyl-CoA to form malonyl-CoA.</text>
</comment>
<comment type="catalytic activity">
    <reaction evidence="1">
        <text>N(6)-carboxybiotinyl-L-lysyl-[protein] + acetyl-CoA = N(6)-biotinyl-L-lysyl-[protein] + malonyl-CoA</text>
        <dbReference type="Rhea" id="RHEA:54728"/>
        <dbReference type="Rhea" id="RHEA-COMP:10505"/>
        <dbReference type="Rhea" id="RHEA-COMP:10506"/>
        <dbReference type="ChEBI" id="CHEBI:57288"/>
        <dbReference type="ChEBI" id="CHEBI:57384"/>
        <dbReference type="ChEBI" id="CHEBI:83144"/>
        <dbReference type="ChEBI" id="CHEBI:83145"/>
        <dbReference type="EC" id="2.1.3.15"/>
    </reaction>
</comment>
<comment type="pathway">
    <text evidence="1">Lipid metabolism; malonyl-CoA biosynthesis; malonyl-CoA from acetyl-CoA: step 1/1.</text>
</comment>
<comment type="subunit">
    <text evidence="1">Acetyl-CoA carboxylase is a heterohexamer composed of biotin carboxyl carrier protein (AccB), biotin carboxylase (AccC) and two subunits each of ACCase subunit alpha (AccA) and ACCase subunit beta (AccD).</text>
</comment>
<comment type="subcellular location">
    <subcellularLocation>
        <location evidence="1">Cytoplasm</location>
    </subcellularLocation>
</comment>
<comment type="similarity">
    <text evidence="1">Belongs to the AccA family.</text>
</comment>
<gene>
    <name evidence="1" type="primary">accA</name>
    <name type="ordered locus">BALH_4183</name>
</gene>
<reference key="1">
    <citation type="journal article" date="2007" name="J. Bacteriol.">
        <title>The complete genome sequence of Bacillus thuringiensis Al Hakam.</title>
        <authorList>
            <person name="Challacombe J.F."/>
            <person name="Altherr M.R."/>
            <person name="Xie G."/>
            <person name="Bhotika S.S."/>
            <person name="Brown N."/>
            <person name="Bruce D."/>
            <person name="Campbell C.S."/>
            <person name="Campbell M.L."/>
            <person name="Chen J."/>
            <person name="Chertkov O."/>
            <person name="Cleland C."/>
            <person name="Dimitrijevic M."/>
            <person name="Doggett N.A."/>
            <person name="Fawcett J.J."/>
            <person name="Glavina T."/>
            <person name="Goodwin L.A."/>
            <person name="Green L.D."/>
            <person name="Han C.S."/>
            <person name="Hill K.K."/>
            <person name="Hitchcock P."/>
            <person name="Jackson P.J."/>
            <person name="Keim P."/>
            <person name="Kewalramani A.R."/>
            <person name="Longmire J."/>
            <person name="Lucas S."/>
            <person name="Malfatti S."/>
            <person name="Martinez D."/>
            <person name="McMurry K."/>
            <person name="Meincke L.J."/>
            <person name="Misra M."/>
            <person name="Moseman B.L."/>
            <person name="Mundt M."/>
            <person name="Munk A.C."/>
            <person name="Okinaka R.T."/>
            <person name="Parson-Quintana B."/>
            <person name="Reilly L.P."/>
            <person name="Richardson P."/>
            <person name="Robinson D.L."/>
            <person name="Saunders E."/>
            <person name="Tapia R."/>
            <person name="Tesmer J.G."/>
            <person name="Thayer N."/>
            <person name="Thompson L.S."/>
            <person name="Tice H."/>
            <person name="Ticknor L.O."/>
            <person name="Wills P.L."/>
            <person name="Gilna P."/>
            <person name="Brettin T.S."/>
        </authorList>
    </citation>
    <scope>NUCLEOTIDE SEQUENCE [LARGE SCALE GENOMIC DNA]</scope>
    <source>
        <strain>Al Hakam</strain>
    </source>
</reference>
<name>ACCA_BACAH</name>
<accession>A0RJJ7</accession>
<feature type="chain" id="PRO_1000062578" description="Acetyl-coenzyme A carboxylase carboxyl transferase subunit alpha">
    <location>
        <begin position="1"/>
        <end position="324"/>
    </location>
</feature>
<feature type="domain" description="CoA carboxyltransferase C-terminal" evidence="2">
    <location>
        <begin position="37"/>
        <end position="291"/>
    </location>
</feature>